<comment type="function">
    <text evidence="1">Positively regulates the activity of the minus-end directed microtubule motor protein dynein. Plays a central role in positioning the mitotic spindle at the bud neck during cell division. Targets cytoplasmic dynein to microtubule plus ends, thereby promoting dynein-mediated microtubule sliding along the bud cortex and consequently the movement of the mitotic spindle to the bud neck.</text>
</comment>
<comment type="subunit">
    <text evidence="1">Self-associates. Interacts with NDL1 and dynein.</text>
</comment>
<comment type="subcellular location">
    <subcellularLocation>
        <location evidence="1">Cytoplasm</location>
        <location evidence="1">Cytoskeleton</location>
    </subcellularLocation>
    <subcellularLocation>
        <location evidence="1">Cytoplasm</location>
        <location evidence="1">Cytoskeleton</location>
        <location evidence="1">Spindle pole</location>
    </subcellularLocation>
    <text evidence="1">Localizes to the plus ends of microtubules and the mitotic spindle poles.</text>
</comment>
<comment type="similarity">
    <text evidence="1">Belongs to the WD repeat LIS1/nudF family.</text>
</comment>
<evidence type="ECO:0000255" key="1">
    <source>
        <dbReference type="HAMAP-Rule" id="MF_03141"/>
    </source>
</evidence>
<proteinExistence type="inferred from homology"/>
<name>LIS1_PICGU</name>
<sequence>MSILSPRQQQELNRAIVQYIGKIISDNSENLEHGEKNGVLQHQDLVDKVANLLDVPTSSEDLTTNYLEKKWSTVLRLQRKIMDLTDEVSNLKTIIEAKHANGGSEISKDKINWLPTSVFKTFPTQTHQSVNTVAVHPYLPLIMAGCSDGTLSVWNIANDDPSIPEKSIRAHSRAVNRIRWSNSPVELSVKAGASNKSYIFASCSSDLSIKIWDGNSNSQIRILTGHDHTVSSIAFSPSKPSILYSVSRDKTTKIWDSTNGYCTRTFIGHSDWVRDLDVIAAKQKSLGDFILTCSNDQSVRLSHADSGTGLCLLVGHSHVIESVRFLPMHSNAHIDKYLKENSDRFPSMPPELVSAPIYDDVLGYKYCVSAGRDNIVKLWLMPPAVVRPNAHPLPAATNNSQGWHIADLTGHQSWVKTLQVHPNGRFIFSAGDDKSIRVWDLSTLATGGRVTEVKKLMKHEGFVNDINAAPLSEPKDTTNEDILQDIESRMRCVFVSGGTDNTVRLWS</sequence>
<protein>
    <recommendedName>
        <fullName evidence="1">Nuclear distribution protein PAC1</fullName>
    </recommendedName>
    <alternativeName>
        <fullName evidence="1">Lissencephaly-1 homolog</fullName>
        <shortName evidence="1">LIS-1</shortName>
    </alternativeName>
    <alternativeName>
        <fullName evidence="1">nudF homolog</fullName>
    </alternativeName>
</protein>
<keyword id="KW-0131">Cell cycle</keyword>
<keyword id="KW-0132">Cell division</keyword>
<keyword id="KW-0175">Coiled coil</keyword>
<keyword id="KW-0963">Cytoplasm</keyword>
<keyword id="KW-0206">Cytoskeleton</keyword>
<keyword id="KW-0493">Microtubule</keyword>
<keyword id="KW-0498">Mitosis</keyword>
<keyword id="KW-1185">Reference proteome</keyword>
<keyword id="KW-0677">Repeat</keyword>
<keyword id="KW-0813">Transport</keyword>
<keyword id="KW-0853">WD repeat</keyword>
<reference key="1">
    <citation type="journal article" date="2009" name="Nature">
        <title>Evolution of pathogenicity and sexual reproduction in eight Candida genomes.</title>
        <authorList>
            <person name="Butler G."/>
            <person name="Rasmussen M.D."/>
            <person name="Lin M.F."/>
            <person name="Santos M.A.S."/>
            <person name="Sakthikumar S."/>
            <person name="Munro C.A."/>
            <person name="Rheinbay E."/>
            <person name="Grabherr M."/>
            <person name="Forche A."/>
            <person name="Reedy J.L."/>
            <person name="Agrafioti I."/>
            <person name="Arnaud M.B."/>
            <person name="Bates S."/>
            <person name="Brown A.J.P."/>
            <person name="Brunke S."/>
            <person name="Costanzo M.C."/>
            <person name="Fitzpatrick D.A."/>
            <person name="de Groot P.W.J."/>
            <person name="Harris D."/>
            <person name="Hoyer L.L."/>
            <person name="Hube B."/>
            <person name="Klis F.M."/>
            <person name="Kodira C."/>
            <person name="Lennard N."/>
            <person name="Logue M.E."/>
            <person name="Martin R."/>
            <person name="Neiman A.M."/>
            <person name="Nikolaou E."/>
            <person name="Quail M.A."/>
            <person name="Quinn J."/>
            <person name="Santos M.C."/>
            <person name="Schmitzberger F.F."/>
            <person name="Sherlock G."/>
            <person name="Shah P."/>
            <person name="Silverstein K.A.T."/>
            <person name="Skrzypek M.S."/>
            <person name="Soll D."/>
            <person name="Staggs R."/>
            <person name="Stansfield I."/>
            <person name="Stumpf M.P.H."/>
            <person name="Sudbery P.E."/>
            <person name="Srikantha T."/>
            <person name="Zeng Q."/>
            <person name="Berman J."/>
            <person name="Berriman M."/>
            <person name="Heitman J."/>
            <person name="Gow N.A.R."/>
            <person name="Lorenz M.C."/>
            <person name="Birren B.W."/>
            <person name="Kellis M."/>
            <person name="Cuomo C.A."/>
        </authorList>
    </citation>
    <scope>NUCLEOTIDE SEQUENCE [LARGE SCALE GENOMIC DNA]</scope>
    <source>
        <strain>ATCC 6260 / CBS 566 / DSM 6381 / JCM 1539 / NBRC 10279 / NRRL Y-324</strain>
    </source>
</reference>
<gene>
    <name evidence="1" type="primary">PAC1</name>
    <name evidence="1" type="synonym">LIS1</name>
    <name type="ORF">PGUG_03576</name>
</gene>
<feature type="chain" id="PRO_0000405093" description="Nuclear distribution protein PAC1">
    <location>
        <begin position="1"/>
        <end position="507"/>
    </location>
</feature>
<feature type="repeat" description="WD 1">
    <location>
        <begin position="125"/>
        <end position="164"/>
    </location>
</feature>
<feature type="repeat" description="WD 2">
    <location>
        <begin position="170"/>
        <end position="222"/>
    </location>
</feature>
<feature type="repeat" description="WD 3">
    <location>
        <begin position="225"/>
        <end position="265"/>
    </location>
</feature>
<feature type="repeat" description="WD 4">
    <location>
        <begin position="268"/>
        <end position="312"/>
    </location>
</feature>
<feature type="repeat" description="WD 5">
    <location>
        <begin position="315"/>
        <end position="389"/>
    </location>
</feature>
<feature type="repeat" description="WD 6">
    <location>
        <begin position="410"/>
        <end position="449"/>
    </location>
</feature>
<feature type="repeat" description="WD 7">
    <location>
        <begin position="474"/>
        <end position="507"/>
    </location>
</feature>
<feature type="coiled-coil region" evidence="1">
    <location>
        <begin position="72"/>
        <end position="98"/>
    </location>
</feature>
<dbReference type="EMBL" id="CH408158">
    <property type="protein sequence ID" value="EDK39478.2"/>
    <property type="molecule type" value="Genomic_DNA"/>
</dbReference>
<dbReference type="RefSeq" id="XP_001484195.1">
    <property type="nucleotide sequence ID" value="XM_001484145.1"/>
</dbReference>
<dbReference type="SMR" id="A5DJX5"/>
<dbReference type="FunCoup" id="A5DJX5">
    <property type="interactions" value="65"/>
</dbReference>
<dbReference type="STRING" id="294746.A5DJX5"/>
<dbReference type="GeneID" id="5125928"/>
<dbReference type="KEGG" id="pgu:PGUG_03576"/>
<dbReference type="VEuPathDB" id="FungiDB:PGUG_03576"/>
<dbReference type="eggNOG" id="KOG0295">
    <property type="taxonomic scope" value="Eukaryota"/>
</dbReference>
<dbReference type="HOGENOM" id="CLU_000288_57_15_1"/>
<dbReference type="InParanoid" id="A5DJX5"/>
<dbReference type="OMA" id="WHVATKE"/>
<dbReference type="OrthoDB" id="10264588at2759"/>
<dbReference type="Proteomes" id="UP000001997">
    <property type="component" value="Unassembled WGS sequence"/>
</dbReference>
<dbReference type="GO" id="GO:0005737">
    <property type="term" value="C:cytoplasm"/>
    <property type="evidence" value="ECO:0007669"/>
    <property type="project" value="UniProtKB-UniRule"/>
</dbReference>
<dbReference type="GO" id="GO:0005874">
    <property type="term" value="C:microtubule"/>
    <property type="evidence" value="ECO:0007669"/>
    <property type="project" value="UniProtKB-KW"/>
</dbReference>
<dbReference type="GO" id="GO:0005875">
    <property type="term" value="C:microtubule associated complex"/>
    <property type="evidence" value="ECO:0007669"/>
    <property type="project" value="UniProtKB-UniRule"/>
</dbReference>
<dbReference type="GO" id="GO:0000922">
    <property type="term" value="C:spindle pole"/>
    <property type="evidence" value="ECO:0007669"/>
    <property type="project" value="UniProtKB-SubCell"/>
</dbReference>
<dbReference type="GO" id="GO:0070840">
    <property type="term" value="F:dynein complex binding"/>
    <property type="evidence" value="ECO:0007669"/>
    <property type="project" value="UniProtKB-UniRule"/>
</dbReference>
<dbReference type="GO" id="GO:0051301">
    <property type="term" value="P:cell division"/>
    <property type="evidence" value="ECO:0007669"/>
    <property type="project" value="UniProtKB-KW"/>
</dbReference>
<dbReference type="GO" id="GO:0000132">
    <property type="term" value="P:establishment of mitotic spindle orientation"/>
    <property type="evidence" value="ECO:0007669"/>
    <property type="project" value="UniProtKB-UniRule"/>
</dbReference>
<dbReference type="GO" id="GO:0051012">
    <property type="term" value="P:microtubule sliding"/>
    <property type="evidence" value="ECO:0007669"/>
    <property type="project" value="UniProtKB-UniRule"/>
</dbReference>
<dbReference type="CDD" id="cd00200">
    <property type="entry name" value="WD40"/>
    <property type="match status" value="1"/>
</dbReference>
<dbReference type="Gene3D" id="1.20.960.30">
    <property type="match status" value="1"/>
</dbReference>
<dbReference type="Gene3D" id="2.130.10.10">
    <property type="entry name" value="YVTN repeat-like/Quinoprotein amine dehydrogenase"/>
    <property type="match status" value="3"/>
</dbReference>
<dbReference type="HAMAP" id="MF_03141">
    <property type="entry name" value="lis1"/>
    <property type="match status" value="1"/>
</dbReference>
<dbReference type="InterPro" id="IPR017252">
    <property type="entry name" value="Dynein_regulator_LIS1"/>
</dbReference>
<dbReference type="InterPro" id="IPR020472">
    <property type="entry name" value="G-protein_beta_WD-40_rep"/>
</dbReference>
<dbReference type="InterPro" id="IPR037190">
    <property type="entry name" value="LIS1_N"/>
</dbReference>
<dbReference type="InterPro" id="IPR015943">
    <property type="entry name" value="WD40/YVTN_repeat-like_dom_sf"/>
</dbReference>
<dbReference type="InterPro" id="IPR019775">
    <property type="entry name" value="WD40_repeat_CS"/>
</dbReference>
<dbReference type="InterPro" id="IPR036322">
    <property type="entry name" value="WD40_repeat_dom_sf"/>
</dbReference>
<dbReference type="InterPro" id="IPR001680">
    <property type="entry name" value="WD40_rpt"/>
</dbReference>
<dbReference type="InterPro" id="IPR050349">
    <property type="entry name" value="WD_LIS1/nudF_dynein_reg"/>
</dbReference>
<dbReference type="PANTHER" id="PTHR44129">
    <property type="entry name" value="WD REPEAT-CONTAINING PROTEIN POP1"/>
    <property type="match status" value="1"/>
</dbReference>
<dbReference type="Pfam" id="PF00400">
    <property type="entry name" value="WD40"/>
    <property type="match status" value="6"/>
</dbReference>
<dbReference type="PIRSF" id="PIRSF037647">
    <property type="entry name" value="Dynein_regulator_Lis1"/>
    <property type="match status" value="1"/>
</dbReference>
<dbReference type="PRINTS" id="PR00320">
    <property type="entry name" value="GPROTEINBRPT"/>
</dbReference>
<dbReference type="SMART" id="SM00320">
    <property type="entry name" value="WD40"/>
    <property type="match status" value="7"/>
</dbReference>
<dbReference type="SUPFAM" id="SSF109925">
    <property type="entry name" value="Lissencephaly-1 protein (Lis-1, PAF-AH alpha) N-terminal domain"/>
    <property type="match status" value="1"/>
</dbReference>
<dbReference type="SUPFAM" id="SSF50978">
    <property type="entry name" value="WD40 repeat-like"/>
    <property type="match status" value="1"/>
</dbReference>
<dbReference type="PROSITE" id="PS00678">
    <property type="entry name" value="WD_REPEATS_1"/>
    <property type="match status" value="3"/>
</dbReference>
<dbReference type="PROSITE" id="PS50082">
    <property type="entry name" value="WD_REPEATS_2"/>
    <property type="match status" value="4"/>
</dbReference>
<dbReference type="PROSITE" id="PS50294">
    <property type="entry name" value="WD_REPEATS_REGION"/>
    <property type="match status" value="1"/>
</dbReference>
<organism>
    <name type="scientific">Meyerozyma guilliermondii (strain ATCC 6260 / CBS 566 / DSM 6381 / JCM 1539 / NBRC 10279 / NRRL Y-324)</name>
    <name type="common">Yeast</name>
    <name type="synonym">Candida guilliermondii</name>
    <dbReference type="NCBI Taxonomy" id="294746"/>
    <lineage>
        <taxon>Eukaryota</taxon>
        <taxon>Fungi</taxon>
        <taxon>Dikarya</taxon>
        <taxon>Ascomycota</taxon>
        <taxon>Saccharomycotina</taxon>
        <taxon>Pichiomycetes</taxon>
        <taxon>Debaryomycetaceae</taxon>
        <taxon>Meyerozyma</taxon>
    </lineage>
</organism>
<accession>A5DJX5</accession>